<organism>
    <name type="scientific">Lactococcus lactis subsp. cremoris (strain SK11)</name>
    <dbReference type="NCBI Taxonomy" id="272622"/>
    <lineage>
        <taxon>Bacteria</taxon>
        <taxon>Bacillati</taxon>
        <taxon>Bacillota</taxon>
        <taxon>Bacilli</taxon>
        <taxon>Lactobacillales</taxon>
        <taxon>Streptococcaceae</taxon>
        <taxon>Lactococcus</taxon>
        <taxon>Lactococcus cremoris subsp. cremoris</taxon>
    </lineage>
</organism>
<dbReference type="EC" id="4.1.1.48" evidence="1"/>
<dbReference type="EMBL" id="CP000425">
    <property type="protein sequence ID" value="ABJ73058.1"/>
    <property type="molecule type" value="Genomic_DNA"/>
</dbReference>
<dbReference type="RefSeq" id="WP_011676418.1">
    <property type="nucleotide sequence ID" value="NC_008527.1"/>
</dbReference>
<dbReference type="SMR" id="Q02YB4"/>
<dbReference type="KEGG" id="llc:LACR_1552"/>
<dbReference type="HOGENOM" id="CLU_034247_2_1_9"/>
<dbReference type="UniPathway" id="UPA00035">
    <property type="reaction ID" value="UER00043"/>
</dbReference>
<dbReference type="Proteomes" id="UP000000240">
    <property type="component" value="Chromosome"/>
</dbReference>
<dbReference type="GO" id="GO:0004425">
    <property type="term" value="F:indole-3-glycerol-phosphate synthase activity"/>
    <property type="evidence" value="ECO:0007669"/>
    <property type="project" value="UniProtKB-UniRule"/>
</dbReference>
<dbReference type="GO" id="GO:0004640">
    <property type="term" value="F:phosphoribosylanthranilate isomerase activity"/>
    <property type="evidence" value="ECO:0007669"/>
    <property type="project" value="TreeGrafter"/>
</dbReference>
<dbReference type="GO" id="GO:0000162">
    <property type="term" value="P:L-tryptophan biosynthetic process"/>
    <property type="evidence" value="ECO:0007669"/>
    <property type="project" value="UniProtKB-UniRule"/>
</dbReference>
<dbReference type="CDD" id="cd00331">
    <property type="entry name" value="IGPS"/>
    <property type="match status" value="1"/>
</dbReference>
<dbReference type="FunFam" id="3.20.20.70:FF:000024">
    <property type="entry name" value="Indole-3-glycerol phosphate synthase"/>
    <property type="match status" value="1"/>
</dbReference>
<dbReference type="Gene3D" id="3.20.20.70">
    <property type="entry name" value="Aldolase class I"/>
    <property type="match status" value="1"/>
</dbReference>
<dbReference type="HAMAP" id="MF_00134_B">
    <property type="entry name" value="IGPS_B"/>
    <property type="match status" value="1"/>
</dbReference>
<dbReference type="InterPro" id="IPR013785">
    <property type="entry name" value="Aldolase_TIM"/>
</dbReference>
<dbReference type="InterPro" id="IPR045186">
    <property type="entry name" value="Indole-3-glycerol_P_synth"/>
</dbReference>
<dbReference type="InterPro" id="IPR013798">
    <property type="entry name" value="Indole-3-glycerol_P_synth_dom"/>
</dbReference>
<dbReference type="InterPro" id="IPR001468">
    <property type="entry name" value="Indole-3-GlycerolPSynthase_CS"/>
</dbReference>
<dbReference type="InterPro" id="IPR011060">
    <property type="entry name" value="RibuloseP-bd_barrel"/>
</dbReference>
<dbReference type="NCBIfam" id="NF001371">
    <property type="entry name" value="PRK00278.1-3"/>
    <property type="match status" value="1"/>
</dbReference>
<dbReference type="PANTHER" id="PTHR22854:SF2">
    <property type="entry name" value="INDOLE-3-GLYCEROL-PHOSPHATE SYNTHASE"/>
    <property type="match status" value="1"/>
</dbReference>
<dbReference type="PANTHER" id="PTHR22854">
    <property type="entry name" value="TRYPTOPHAN BIOSYNTHESIS PROTEIN"/>
    <property type="match status" value="1"/>
</dbReference>
<dbReference type="Pfam" id="PF00218">
    <property type="entry name" value="IGPS"/>
    <property type="match status" value="1"/>
</dbReference>
<dbReference type="SUPFAM" id="SSF51366">
    <property type="entry name" value="Ribulose-phoshate binding barrel"/>
    <property type="match status" value="1"/>
</dbReference>
<dbReference type="PROSITE" id="PS00614">
    <property type="entry name" value="IGPS"/>
    <property type="match status" value="1"/>
</dbReference>
<reference key="1">
    <citation type="journal article" date="2006" name="Proc. Natl. Acad. Sci. U.S.A.">
        <title>Comparative genomics of the lactic acid bacteria.</title>
        <authorList>
            <person name="Makarova K.S."/>
            <person name="Slesarev A."/>
            <person name="Wolf Y.I."/>
            <person name="Sorokin A."/>
            <person name="Mirkin B."/>
            <person name="Koonin E.V."/>
            <person name="Pavlov A."/>
            <person name="Pavlova N."/>
            <person name="Karamychev V."/>
            <person name="Polouchine N."/>
            <person name="Shakhova V."/>
            <person name="Grigoriev I."/>
            <person name="Lou Y."/>
            <person name="Rohksar D."/>
            <person name="Lucas S."/>
            <person name="Huang K."/>
            <person name="Goodstein D.M."/>
            <person name="Hawkins T."/>
            <person name="Plengvidhya V."/>
            <person name="Welker D."/>
            <person name="Hughes J."/>
            <person name="Goh Y."/>
            <person name="Benson A."/>
            <person name="Baldwin K."/>
            <person name="Lee J.-H."/>
            <person name="Diaz-Muniz I."/>
            <person name="Dosti B."/>
            <person name="Smeianov V."/>
            <person name="Wechter W."/>
            <person name="Barabote R."/>
            <person name="Lorca G."/>
            <person name="Altermann E."/>
            <person name="Barrangou R."/>
            <person name="Ganesan B."/>
            <person name="Xie Y."/>
            <person name="Rawsthorne H."/>
            <person name="Tamir D."/>
            <person name="Parker C."/>
            <person name="Breidt F."/>
            <person name="Broadbent J.R."/>
            <person name="Hutkins R."/>
            <person name="O'Sullivan D."/>
            <person name="Steele J."/>
            <person name="Unlu G."/>
            <person name="Saier M.H. Jr."/>
            <person name="Klaenhammer T."/>
            <person name="Richardson P."/>
            <person name="Kozyavkin S."/>
            <person name="Weimer B.C."/>
            <person name="Mills D.A."/>
        </authorList>
    </citation>
    <scope>NUCLEOTIDE SEQUENCE [LARGE SCALE GENOMIC DNA]</scope>
    <source>
        <strain>SK11</strain>
    </source>
</reference>
<comment type="catalytic activity">
    <reaction evidence="1">
        <text>1-(2-carboxyphenylamino)-1-deoxy-D-ribulose 5-phosphate + H(+) = (1S,2R)-1-C-(indol-3-yl)glycerol 3-phosphate + CO2 + H2O</text>
        <dbReference type="Rhea" id="RHEA:23476"/>
        <dbReference type="ChEBI" id="CHEBI:15377"/>
        <dbReference type="ChEBI" id="CHEBI:15378"/>
        <dbReference type="ChEBI" id="CHEBI:16526"/>
        <dbReference type="ChEBI" id="CHEBI:58613"/>
        <dbReference type="ChEBI" id="CHEBI:58866"/>
        <dbReference type="EC" id="4.1.1.48"/>
    </reaction>
</comment>
<comment type="pathway">
    <text evidence="1">Amino-acid biosynthesis; L-tryptophan biosynthesis; L-tryptophan from chorismate: step 4/5.</text>
</comment>
<comment type="similarity">
    <text evidence="1">Belongs to the TrpC family.</text>
</comment>
<accession>Q02YB4</accession>
<gene>
    <name evidence="1" type="primary">trpC</name>
    <name type="ordered locus">LACR_1552</name>
</gene>
<evidence type="ECO:0000255" key="1">
    <source>
        <dbReference type="HAMAP-Rule" id="MF_00134"/>
    </source>
</evidence>
<proteinExistence type="inferred from homology"/>
<keyword id="KW-0028">Amino-acid biosynthesis</keyword>
<keyword id="KW-0057">Aromatic amino acid biosynthesis</keyword>
<keyword id="KW-0210">Decarboxylase</keyword>
<keyword id="KW-0456">Lyase</keyword>
<keyword id="KW-0822">Tryptophan biosynthesis</keyword>
<sequence length="264" mass="29861">MNIKEGKFLETILAEKKQEIAQMPDENSKPIRQTYRLYDYLKKHSDQLQVIAEVKKASPSLGDINLEVDIIAQAKNYEQAGAAMISVLTDPVFFKGNIEYLREISKNVQIPTLNKDFIIDKKQINRALNAGATVILLIVACFENDFEKLEELYNYAISLGLEVLVETHNKAELDRAHQLAAKIIGVNNRNLKTFEVSLQNSTDLVPYFKEENVYISESGIFGKKEAQKVAENFNGILVGTALMQANNLTKSLTDLKIKRKNDEH</sequence>
<feature type="chain" id="PRO_1000018489" description="Indole-3-glycerol phosphate synthase">
    <location>
        <begin position="1"/>
        <end position="264"/>
    </location>
</feature>
<protein>
    <recommendedName>
        <fullName evidence="1">Indole-3-glycerol phosphate synthase</fullName>
        <shortName evidence="1">IGPS</shortName>
        <ecNumber evidence="1">4.1.1.48</ecNumber>
    </recommendedName>
</protein>
<name>TRPC_LACLS</name>